<proteinExistence type="evidence at protein level"/>
<protein>
    <recommendedName>
        <fullName evidence="7">Uridine-5'-phosphate dioxygenase</fullName>
        <ecNumber evidence="2 3">1.14.11.49</ecNumber>
    </recommendedName>
    <alternativeName>
        <fullName evidence="5">Fe(II)-dependent alpha-ketoglutarate:uridine-5'-monophosphate dioxygenase</fullName>
        <shortName evidence="5">Fe(II)-dependent alpha-KG:UMP dioxygenase</shortName>
    </alternativeName>
    <alternativeName>
        <fullName evidence="6">UMP:alpha-ketoglutarate dioxygenase</fullName>
    </alternativeName>
</protein>
<dbReference type="EC" id="1.14.11.49" evidence="2 3"/>
<dbReference type="EMBL" id="AB530986">
    <property type="protein sequence ID" value="BAJ05888.1"/>
    <property type="molecule type" value="Genomic_DNA"/>
</dbReference>
<dbReference type="SMR" id="D4QF25"/>
<dbReference type="KEGG" id="ag:BAJ05888"/>
<dbReference type="BioCyc" id="MetaCyc:MONOMER-17977"/>
<dbReference type="GO" id="GO:0051213">
    <property type="term" value="F:dioxygenase activity"/>
    <property type="evidence" value="ECO:0007669"/>
    <property type="project" value="UniProtKB-KW"/>
</dbReference>
<dbReference type="GO" id="GO:0046872">
    <property type="term" value="F:metal ion binding"/>
    <property type="evidence" value="ECO:0007669"/>
    <property type="project" value="UniProtKB-KW"/>
</dbReference>
<dbReference type="GO" id="GO:0017000">
    <property type="term" value="P:antibiotic biosynthetic process"/>
    <property type="evidence" value="ECO:0007669"/>
    <property type="project" value="UniProtKB-KW"/>
</dbReference>
<dbReference type="Gene3D" id="3.60.130.10">
    <property type="entry name" value="Clavaminate synthase-like"/>
    <property type="match status" value="1"/>
</dbReference>
<dbReference type="InterPro" id="IPR050411">
    <property type="entry name" value="AlphaKG_dependent_hydroxylases"/>
</dbReference>
<dbReference type="InterPro" id="IPR042098">
    <property type="entry name" value="TauD-like_sf"/>
</dbReference>
<dbReference type="InterPro" id="IPR003819">
    <property type="entry name" value="TauD/TfdA-like"/>
</dbReference>
<dbReference type="PANTHER" id="PTHR10696">
    <property type="entry name" value="GAMMA-BUTYROBETAINE HYDROXYLASE-RELATED"/>
    <property type="match status" value="1"/>
</dbReference>
<dbReference type="PANTHER" id="PTHR10696:SF56">
    <property type="entry name" value="TAUD_TFDA-LIKE DOMAIN-CONTAINING PROTEIN"/>
    <property type="match status" value="1"/>
</dbReference>
<dbReference type="Pfam" id="PF02668">
    <property type="entry name" value="TauD"/>
    <property type="match status" value="1"/>
</dbReference>
<dbReference type="SUPFAM" id="SSF51197">
    <property type="entry name" value="Clavaminate synthase-like"/>
    <property type="match status" value="1"/>
</dbReference>
<organism>
    <name type="scientific">Streptomyces sp</name>
    <dbReference type="NCBI Taxonomy" id="1931"/>
    <lineage>
        <taxon>Bacteria</taxon>
        <taxon>Bacillati</taxon>
        <taxon>Actinomycetota</taxon>
        <taxon>Actinomycetes</taxon>
        <taxon>Kitasatosporales</taxon>
        <taxon>Streptomycetaceae</taxon>
        <taxon>Streptomyces</taxon>
    </lineage>
</organism>
<sequence>MQLMKSSYLELTARGHVTDLLKPDDTLEMLETYGFAVTQSPVEAVSTAHAYREIAAIREDFGLGEPYVPLLYRDRDEPTVTAVTRKGGSDHPVFHTGEAQGWHTDGLLEDIGTIKTTLLYCVSPAHRGGRTFLLNAGRVFEELRMEDPEAADVLLRDTILGRRSTIPGVDREAVGPVFLELGDGHYATRYGEGRVERWYPADAAEQHALDRALRFFRARRDDPDVRIDLLLRAGQCLIFRNDVLAHGRENFTDDPQRPRLLLRSLHTNAPKKPS</sequence>
<evidence type="ECO:0000250" key="1">
    <source>
        <dbReference type="UniProtKB" id="P37610"/>
    </source>
</evidence>
<evidence type="ECO:0000269" key="2">
    <source>
    </source>
</evidence>
<evidence type="ECO:0000269" key="3">
    <source>
    </source>
</evidence>
<evidence type="ECO:0000303" key="4">
    <source>
    </source>
</evidence>
<evidence type="ECO:0000303" key="5">
    <source>
    </source>
</evidence>
<evidence type="ECO:0000303" key="6">
    <source>
    </source>
</evidence>
<evidence type="ECO:0000305" key="7"/>
<evidence type="ECO:0000305" key="8">
    <source>
    </source>
</evidence>
<evidence type="ECO:0000305" key="9">
    <source>
    </source>
</evidence>
<reference key="1">
    <citation type="journal article" date="2010" name="ChemBioChem">
        <title>The biosynthesis of liposidomycin-like A-90289 antibiotics featuring a new type of sulfotransferase.</title>
        <authorList>
            <person name="Funabashi M."/>
            <person name="Baba S."/>
            <person name="Nonaka K."/>
            <person name="Hosobuchi M."/>
            <person name="Fujita Y."/>
            <person name="Shibata T."/>
            <person name="Van Lanene S.G."/>
        </authorList>
    </citation>
    <scope>NUCLEOTIDE SEQUENCE [GENOMIC DNA]</scope>
    <source>
        <strain>SANK 60405</strain>
    </source>
</reference>
<reference key="2">
    <citation type="journal article" date="2011" name="J. Biol. Chem.">
        <title>Characterization of LipL as a non-heme, Fe(II)-dependent alpha-ketoglutarate:UMP dioxygenase that generates uridine-5'-aldehyde during A-90289 biosynthesis.</title>
        <authorList>
            <person name="Yang Z."/>
            <person name="Chi X."/>
            <person name="Funabashi M."/>
            <person name="Baba S."/>
            <person name="Nonaka K."/>
            <person name="Pahari P."/>
            <person name="Unrine J."/>
            <person name="Jacobsen J.M."/>
            <person name="Elliott G.I."/>
            <person name="Rohr J."/>
            <person name="Van Lanen S.G."/>
        </authorList>
    </citation>
    <scope>FUNCTION</scope>
    <scope>CATALYTIC ACTIVITY</scope>
    <scope>COFACTOR</scope>
    <scope>ACTIVITY REGULATION</scope>
    <scope>BIOPHYSICOCHEMICAL PROPERTIES</scope>
    <source>
        <strain>SANK 60405</strain>
    </source>
</reference>
<reference key="3">
    <citation type="journal article" date="2012" name="Methods Enzymol.">
        <title>Fe(II)-dependent, uridine-5'-monophosphate alpha-ketoglutarate dioxygenases in the synthesis of 5'-modified nucleosides.</title>
        <authorList>
            <person name="Yang Z."/>
            <person name="Unrine J."/>
            <person name="Nonaka K."/>
            <person name="Van Lanen S.G."/>
        </authorList>
    </citation>
    <scope>CATALYTIC ACTIVITY</scope>
    <source>
        <strain>SANK 60405</strain>
    </source>
</reference>
<keyword id="KW-0045">Antibiotic biosynthesis</keyword>
<keyword id="KW-0223">Dioxygenase</keyword>
<keyword id="KW-0408">Iron</keyword>
<keyword id="KW-0479">Metal-binding</keyword>
<keyword id="KW-0560">Oxidoreductase</keyword>
<gene>
    <name evidence="4" type="primary">lipL</name>
</gene>
<accession>D4QF25</accession>
<comment type="function">
    <text evidence="2">Dioxygenase involved in the biosynthesis of the lipopeptidyl nucleoside antibiotic A-90289 (PubMed:21216959). Catalyzes the dephosphorylation and oxidation of UMP to generate uridine-5'-aldehyde, the first intermediate in the biosynthesis of A-90289 (PubMed:21216959).</text>
</comment>
<comment type="catalytic activity">
    <reaction evidence="2 3">
        <text>UMP + 2-oxoglutarate + O2 = uridine-5'-aldehyde + succinate + phosphate + CO2</text>
        <dbReference type="Rhea" id="RHEA:46500"/>
        <dbReference type="ChEBI" id="CHEBI:15379"/>
        <dbReference type="ChEBI" id="CHEBI:16526"/>
        <dbReference type="ChEBI" id="CHEBI:16810"/>
        <dbReference type="ChEBI" id="CHEBI:30031"/>
        <dbReference type="ChEBI" id="CHEBI:43474"/>
        <dbReference type="ChEBI" id="CHEBI:57865"/>
        <dbReference type="ChEBI" id="CHEBI:86258"/>
        <dbReference type="EC" id="1.14.11.49"/>
    </reaction>
    <physiologicalReaction direction="left-to-right" evidence="9">
        <dbReference type="Rhea" id="RHEA:46501"/>
    </physiologicalReaction>
</comment>
<comment type="cofactor">
    <cofactor evidence="2">
        <name>Fe(2+)</name>
        <dbReference type="ChEBI" id="CHEBI:29033"/>
    </cofactor>
</comment>
<comment type="activity regulation">
    <text evidence="2">Inhibited by several divalent cations, including Zn(2+).</text>
</comment>
<comment type="biophysicochemical properties">
    <kinetics>
        <KM evidence="2">7.5 uM for 2-oxoglutarate</KM>
        <KM evidence="2">14 uM for UMP</KM>
        <text evidence="2">kcat is 92 min(-1) with 2-oxoglutarate as substrate. kcat is 76 min(-1) with UMP as substrate.</text>
    </kinetics>
</comment>
<comment type="pathway">
    <text evidence="8 9">Antibiotic biosynthesis.</text>
</comment>
<feature type="chain" id="PRO_0000450626" description="Uridine-5'-phosphate dioxygenase">
    <location>
        <begin position="1"/>
        <end position="274"/>
    </location>
</feature>
<feature type="binding site" evidence="1">
    <location>
        <position position="103"/>
    </location>
    <ligand>
        <name>Fe cation</name>
        <dbReference type="ChEBI" id="CHEBI:24875"/>
        <note>catalytic</note>
    </ligand>
</feature>
<feature type="binding site" evidence="1">
    <location>
        <position position="105"/>
    </location>
    <ligand>
        <name>Fe cation</name>
        <dbReference type="ChEBI" id="CHEBI:24875"/>
        <note>catalytic</note>
    </ligand>
</feature>
<feature type="binding site" evidence="1">
    <location>
        <position position="246"/>
    </location>
    <ligand>
        <name>Fe cation</name>
        <dbReference type="ChEBI" id="CHEBI:24875"/>
        <note>catalytic</note>
    </ligand>
</feature>
<name>UMPDO_STRSQ</name>